<keyword id="KW-0131">Cell cycle</keyword>
<keyword id="KW-0966">Cell projection</keyword>
<keyword id="KW-0970">Cilium biogenesis/degradation</keyword>
<keyword id="KW-0963">Cytoplasm</keyword>
<keyword id="KW-0968">Cytoplasmic vesicle</keyword>
<keyword id="KW-0206">Cytoskeleton</keyword>
<keyword id="KW-0217">Developmental protein</keyword>
<keyword id="KW-0221">Differentiation</keyword>
<keyword id="KW-0597">Phosphoprotein</keyword>
<keyword id="KW-1185">Reference proteome</keyword>
<keyword id="KW-0744">Spermatogenesis</keyword>
<keyword id="KW-0813">Transport</keyword>
<keyword id="KW-0832">Ubl conjugation</keyword>
<name>CP131_MOUSE</name>
<proteinExistence type="evidence at protein level"/>
<feature type="chain" id="PRO_0000064782" description="Centrosomal protein of 131 kDa">
    <location>
        <begin position="1"/>
        <end position="1060"/>
    </location>
</feature>
<feature type="domain" description="IQ">
    <location>
        <begin position="263"/>
        <end position="283"/>
    </location>
</feature>
<feature type="region of interest" description="Interaction with PLK4" evidence="1">
    <location>
        <begin position="1"/>
        <end position="244"/>
    </location>
</feature>
<feature type="region of interest" description="Disordered" evidence="2">
    <location>
        <begin position="1"/>
        <end position="96"/>
    </location>
</feature>
<feature type="region of interest" description="Disordered" evidence="2">
    <location>
        <begin position="136"/>
        <end position="155"/>
    </location>
</feature>
<feature type="region of interest" description="Disordered" evidence="2">
    <location>
        <begin position="217"/>
        <end position="248"/>
    </location>
</feature>
<feature type="region of interest" description="Disordered" evidence="2">
    <location>
        <begin position="314"/>
        <end position="437"/>
    </location>
</feature>
<feature type="compositionally biased region" description="Polar residues" evidence="2">
    <location>
        <begin position="1"/>
        <end position="11"/>
    </location>
</feature>
<feature type="compositionally biased region" description="Polar residues" evidence="2">
    <location>
        <begin position="32"/>
        <end position="50"/>
    </location>
</feature>
<feature type="compositionally biased region" description="Polar residues" evidence="2">
    <location>
        <begin position="73"/>
        <end position="88"/>
    </location>
</feature>
<feature type="compositionally biased region" description="Basic and acidic residues" evidence="2">
    <location>
        <begin position="217"/>
        <end position="226"/>
    </location>
</feature>
<feature type="compositionally biased region" description="Basic and acidic residues" evidence="2">
    <location>
        <begin position="314"/>
        <end position="327"/>
    </location>
</feature>
<feature type="compositionally biased region" description="Basic and acidic residues" evidence="2">
    <location>
        <begin position="344"/>
        <end position="363"/>
    </location>
</feature>
<feature type="compositionally biased region" description="Low complexity" evidence="2">
    <location>
        <begin position="398"/>
        <end position="408"/>
    </location>
</feature>
<feature type="compositionally biased region" description="Basic and acidic residues" evidence="2">
    <location>
        <begin position="409"/>
        <end position="424"/>
    </location>
</feature>
<feature type="modified residue" description="Phosphoserine" evidence="10">
    <location>
        <position position="14"/>
    </location>
</feature>
<feature type="modified residue" description="Phosphoserine" evidence="1">
    <location>
        <position position="35"/>
    </location>
</feature>
<feature type="modified residue" description="Phosphoserine; by MAPKAPK2" evidence="10">
    <location>
        <position position="47"/>
    </location>
</feature>
<feature type="modified residue" description="Phosphoserine; by MAPKAPK2 and PLK4" evidence="1">
    <location>
        <position position="78"/>
    </location>
</feature>
<feature type="modified residue" description="Phosphoserine" evidence="1">
    <location>
        <position position="89"/>
    </location>
</feature>
<feature type="modified residue" description="Phosphoserine" evidence="1">
    <location>
        <position position="105"/>
    </location>
</feature>
<feature type="modified residue" description="Phosphoserine" evidence="1">
    <location>
        <position position="114"/>
    </location>
</feature>
<feature type="modified residue" description="Phosphoserine" evidence="1">
    <location>
        <position position="146"/>
    </location>
</feature>
<feature type="modified residue" description="Phosphoserine" evidence="1">
    <location>
        <position position="150"/>
    </location>
</feature>
<feature type="modified residue" description="Phosphothreonine" evidence="10">
    <location>
        <position position="473"/>
    </location>
</feature>
<feature type="modified residue" description="Phosphoserine" evidence="10">
    <location>
        <position position="481"/>
    </location>
</feature>
<feature type="sequence conflict" description="In Ref. 1; BAA07868 and 2; BAA19002." evidence="8" ref="1 2">
    <original>V</original>
    <variation>E</variation>
    <location>
        <position position="336"/>
    </location>
</feature>
<organism>
    <name type="scientific">Mus musculus</name>
    <name type="common">Mouse</name>
    <dbReference type="NCBI Taxonomy" id="10090"/>
    <lineage>
        <taxon>Eukaryota</taxon>
        <taxon>Metazoa</taxon>
        <taxon>Chordata</taxon>
        <taxon>Craniata</taxon>
        <taxon>Vertebrata</taxon>
        <taxon>Euteleostomi</taxon>
        <taxon>Mammalia</taxon>
        <taxon>Eutheria</taxon>
        <taxon>Euarchontoglires</taxon>
        <taxon>Glires</taxon>
        <taxon>Rodentia</taxon>
        <taxon>Myomorpha</taxon>
        <taxon>Muroidea</taxon>
        <taxon>Muridae</taxon>
        <taxon>Murinae</taxon>
        <taxon>Mus</taxon>
        <taxon>Mus</taxon>
    </lineage>
</organism>
<evidence type="ECO:0000250" key="1">
    <source>
        <dbReference type="UniProtKB" id="Q9UPN4"/>
    </source>
</evidence>
<evidence type="ECO:0000256" key="2">
    <source>
        <dbReference type="SAM" id="MobiDB-lite"/>
    </source>
</evidence>
<evidence type="ECO:0000269" key="3">
    <source>
    </source>
</evidence>
<evidence type="ECO:0000269" key="4">
    <source>
    </source>
</evidence>
<evidence type="ECO:0000269" key="5">
    <source>
    </source>
</evidence>
<evidence type="ECO:0000269" key="6">
    <source>
    </source>
</evidence>
<evidence type="ECO:0000269" key="7">
    <source>
    </source>
</evidence>
<evidence type="ECO:0000305" key="8"/>
<evidence type="ECO:0000305" key="9">
    <source>
    </source>
</evidence>
<evidence type="ECO:0007744" key="10">
    <source>
    </source>
</evidence>
<gene>
    <name type="primary">Cep131</name>
    <name type="synonym">Az1</name>
    <name type="synonym">Azi</name>
    <name type="synonym">Azi1</name>
</gene>
<protein>
    <recommendedName>
        <fullName>Centrosomal protein of 131 kDa</fullName>
    </recommendedName>
    <alternativeName>
        <fullName>5-azacytidine-induced protein 1</fullName>
    </alternativeName>
    <alternativeName>
        <fullName>Pre-acrosome localization protein 1</fullName>
    </alternativeName>
</protein>
<sequence length="1060" mass="120313">MKGSRTITATPEGSPEAVDLSLIGLPPPMSQRPGSASATRSIFRSMSVATGSEPRKKALEATGPGGPRAINNLRRSNSTTQVNQSWTGSPRPAEPTDFLMLFEGSTSGRRRVASLSKASSEKEATWNVLDEQPRGLALPASAQSPSTLDSALGPRRKECPLAPSFTANNRSNKGAVGNCVTTMVHNHYASSKMVSPPKSSNQTAPSLNNIVKAAAREGGEGSDLGKPRKNLSSASQSARGTTGLLRRREVTEEEAERFIHQVNQAAVTIQRWYRCQVQRRRAGAAALEHLLASKREGQRQRLGGGNLLELHRQEEAARKKAREEKARQARQAAIQVLQQKRAQKASEAEHRRPKDRPETRAPEQPRPMQEPGCVTHPKANNAGASIYPTGPADPCPPASESSPEQWQSPEDKPQDIHSQGEARQDLAVSGSSRGKARARATLDDLLDTLKLLEEEPEPLPHPKAYHKDRYAWTDEEEDANSLTADNLEKFGKLSAAPGPPDDGTLLSEAKLQSIMTFLDEMEKSGQERPAPWRESLVLEAGSGSEGSTSVMRLKLELEEKKQAMALLQRALAQQRDLTVRRVKETEKELTRQLRQQKEQYEATIQRHLSFIDQLIEDKKVLSEKCEAVVAELKHGDQRCRERVAQMQEQHELEIKKLKELMSATEKIRREKWINEKTKKIKEITVRGLEPEIQKLIAKHKQEVRRLRGLHEAELQQREEQAAQRHLRQAEELRQHLDREREVLGQQERERAQQRFEQHLEQEQRALEQQRRRLYNEVAEEKERLGQQAARQRAELEELRQQLEESSAALTRALRAEFERSREEQERRHQMELKALKDQLEAERQAWVASCAKKEEAWLLTRERELKEEIRKGRDQEIELVIHRLEADMTLAKEESERAAESRVKRVRDKYETELSELEQSERKLQERCSELKGRLGEAEGEKERLQSLVRQKEKELEDLRAVNTQMCSERASLAQVVRQEFAEQLAASQEETQRVKVELAELQARQQVELDEVHRRVKTALARKEAAVNSLRKQHEAAVKRADHLEELLEQHKGSSLSSK</sequence>
<dbReference type="EMBL" id="D43921">
    <property type="protein sequence ID" value="BAA07868.1"/>
    <property type="molecule type" value="mRNA"/>
</dbReference>
<dbReference type="EMBL" id="D88509">
    <property type="protein sequence ID" value="BAA19002.1"/>
    <property type="molecule type" value="Genomic_DNA"/>
</dbReference>
<dbReference type="EMBL" id="AL807824">
    <property type="status" value="NOT_ANNOTATED_CDS"/>
    <property type="molecule type" value="Genomic_DNA"/>
</dbReference>
<dbReference type="PIR" id="S63993">
    <property type="entry name" value="S63993"/>
</dbReference>
<dbReference type="RefSeq" id="NP_033864.3">
    <property type="nucleotide sequence ID" value="NM_009734.3"/>
</dbReference>
<dbReference type="RefSeq" id="XP_006532124.1">
    <property type="nucleotide sequence ID" value="XM_006532061.3"/>
</dbReference>
<dbReference type="SMR" id="Q62036"/>
<dbReference type="BioGRID" id="198290">
    <property type="interactions" value="49"/>
</dbReference>
<dbReference type="FunCoup" id="Q62036">
    <property type="interactions" value="992"/>
</dbReference>
<dbReference type="IntAct" id="Q62036">
    <property type="interactions" value="45"/>
</dbReference>
<dbReference type="STRING" id="10090.ENSMUSP00000101834"/>
<dbReference type="GlyGen" id="Q62036">
    <property type="glycosylation" value="2 sites, 1 O-linked glycan (2 sites)"/>
</dbReference>
<dbReference type="iPTMnet" id="Q62036"/>
<dbReference type="PhosphoSitePlus" id="Q62036"/>
<dbReference type="jPOST" id="Q62036"/>
<dbReference type="PaxDb" id="10090-ENSMUSP00000101834"/>
<dbReference type="ProteomicsDB" id="283806"/>
<dbReference type="Pumba" id="Q62036"/>
<dbReference type="Antibodypedia" id="19799">
    <property type="antibodies" value="120 antibodies from 24 providers"/>
</dbReference>
<dbReference type="DNASU" id="12009"/>
<dbReference type="Ensembl" id="ENSMUST00000106229.8">
    <property type="protein sequence ID" value="ENSMUSP00000101836.2"/>
    <property type="gene ID" value="ENSMUSG00000039781.16"/>
</dbReference>
<dbReference type="GeneID" id="12009"/>
<dbReference type="KEGG" id="mmu:12009"/>
<dbReference type="AGR" id="MGI:107440"/>
<dbReference type="CTD" id="22994"/>
<dbReference type="MGI" id="MGI:107440">
    <property type="gene designation" value="Cep131"/>
</dbReference>
<dbReference type="VEuPathDB" id="HostDB:ENSMUSG00000039781"/>
<dbReference type="eggNOG" id="ENOG502RZME">
    <property type="taxonomic scope" value="Eukaryota"/>
</dbReference>
<dbReference type="GeneTree" id="ENSGT00390000001758"/>
<dbReference type="InParanoid" id="Q62036"/>
<dbReference type="OrthoDB" id="197735at2759"/>
<dbReference type="PhylomeDB" id="Q62036"/>
<dbReference type="Reactome" id="R-MMU-2565942">
    <property type="pathway name" value="Regulation of PLK1 Activity at G2/M Transition"/>
</dbReference>
<dbReference type="Reactome" id="R-MMU-380259">
    <property type="pathway name" value="Loss of Nlp from mitotic centrosomes"/>
</dbReference>
<dbReference type="Reactome" id="R-MMU-380270">
    <property type="pathway name" value="Recruitment of mitotic centrosome proteins and complexes"/>
</dbReference>
<dbReference type="Reactome" id="R-MMU-380284">
    <property type="pathway name" value="Loss of proteins required for interphase microtubule organization from the centrosome"/>
</dbReference>
<dbReference type="Reactome" id="R-MMU-380320">
    <property type="pathway name" value="Recruitment of NuMA to mitotic centrosomes"/>
</dbReference>
<dbReference type="Reactome" id="R-MMU-5620912">
    <property type="pathway name" value="Anchoring of the basal body to the plasma membrane"/>
</dbReference>
<dbReference type="Reactome" id="R-MMU-8854518">
    <property type="pathway name" value="AURKA Activation by TPX2"/>
</dbReference>
<dbReference type="BioGRID-ORCS" id="12009">
    <property type="hits" value="0 hits in 79 CRISPR screens"/>
</dbReference>
<dbReference type="PRO" id="PR:Q62036"/>
<dbReference type="Proteomes" id="UP000000589">
    <property type="component" value="Chromosome 11"/>
</dbReference>
<dbReference type="RNAct" id="Q62036">
    <property type="molecule type" value="protein"/>
</dbReference>
<dbReference type="Bgee" id="ENSMUSG00000039781">
    <property type="expression patterns" value="Expressed in ventricular zone and 195 other cell types or tissues"/>
</dbReference>
<dbReference type="ExpressionAtlas" id="Q62036">
    <property type="expression patterns" value="baseline and differential"/>
</dbReference>
<dbReference type="GO" id="GO:0001669">
    <property type="term" value="C:acrosomal vesicle"/>
    <property type="evidence" value="ECO:0000314"/>
    <property type="project" value="MGI"/>
</dbReference>
<dbReference type="GO" id="GO:0034451">
    <property type="term" value="C:centriolar satellite"/>
    <property type="evidence" value="ECO:0000314"/>
    <property type="project" value="MGI"/>
</dbReference>
<dbReference type="GO" id="GO:0005814">
    <property type="term" value="C:centriole"/>
    <property type="evidence" value="ECO:0007669"/>
    <property type="project" value="UniProtKB-SubCell"/>
</dbReference>
<dbReference type="GO" id="GO:0005813">
    <property type="term" value="C:centrosome"/>
    <property type="evidence" value="ECO:0000250"/>
    <property type="project" value="UniProtKB"/>
</dbReference>
<dbReference type="GO" id="GO:0036064">
    <property type="term" value="C:ciliary basal body"/>
    <property type="evidence" value="ECO:0007669"/>
    <property type="project" value="Ensembl"/>
</dbReference>
<dbReference type="GO" id="GO:0035869">
    <property type="term" value="C:ciliary transition zone"/>
    <property type="evidence" value="ECO:0000314"/>
    <property type="project" value="MGI"/>
</dbReference>
<dbReference type="GO" id="GO:0045171">
    <property type="term" value="C:intercellular bridge"/>
    <property type="evidence" value="ECO:0007669"/>
    <property type="project" value="Ensembl"/>
</dbReference>
<dbReference type="GO" id="GO:0002177">
    <property type="term" value="C:manchette"/>
    <property type="evidence" value="ECO:0007669"/>
    <property type="project" value="GOC"/>
</dbReference>
<dbReference type="GO" id="GO:0120212">
    <property type="term" value="C:sperm head-tail coupling apparatus"/>
    <property type="evidence" value="ECO:0000314"/>
    <property type="project" value="MGI"/>
</dbReference>
<dbReference type="GO" id="GO:0042803">
    <property type="term" value="F:protein homodimerization activity"/>
    <property type="evidence" value="ECO:0000250"/>
    <property type="project" value="UniProtKB"/>
</dbReference>
<dbReference type="GO" id="GO:0044877">
    <property type="term" value="F:protein-containing complex binding"/>
    <property type="evidence" value="ECO:0000314"/>
    <property type="project" value="UniProtKB"/>
</dbReference>
<dbReference type="GO" id="GO:0042073">
    <property type="term" value="P:intraciliary transport"/>
    <property type="evidence" value="ECO:0000315"/>
    <property type="project" value="MGI"/>
</dbReference>
<dbReference type="GO" id="GO:0035735">
    <property type="term" value="P:intraciliary transport involved in cilium assembly"/>
    <property type="evidence" value="ECO:0000250"/>
    <property type="project" value="UniProtKB"/>
</dbReference>
<dbReference type="GO" id="GO:1990953">
    <property type="term" value="P:intramanchette transport"/>
    <property type="evidence" value="ECO:0000315"/>
    <property type="project" value="MGI"/>
</dbReference>
<dbReference type="GO" id="GO:1905198">
    <property type="term" value="P:manchette assembly"/>
    <property type="evidence" value="ECO:0000315"/>
    <property type="project" value="MGI"/>
</dbReference>
<dbReference type="GO" id="GO:1905515">
    <property type="term" value="P:non-motile cilium assembly"/>
    <property type="evidence" value="ECO:0000315"/>
    <property type="project" value="MGI"/>
</dbReference>
<dbReference type="GO" id="GO:0008284">
    <property type="term" value="P:positive regulation of cell population proliferation"/>
    <property type="evidence" value="ECO:0000250"/>
    <property type="project" value="UniProtKB"/>
</dbReference>
<dbReference type="GO" id="GO:0090316">
    <property type="term" value="P:positive regulation of intracellular protein transport"/>
    <property type="evidence" value="ECO:0000250"/>
    <property type="project" value="UniProtKB"/>
</dbReference>
<dbReference type="GO" id="GO:0071539">
    <property type="term" value="P:protein localization to centrosome"/>
    <property type="evidence" value="ECO:0007669"/>
    <property type="project" value="Ensembl"/>
</dbReference>
<dbReference type="GO" id="GO:0010824">
    <property type="term" value="P:regulation of centrosome duplication"/>
    <property type="evidence" value="ECO:0000250"/>
    <property type="project" value="UniProtKB"/>
</dbReference>
<dbReference type="GO" id="GO:0007288">
    <property type="term" value="P:sperm axoneme assembly"/>
    <property type="evidence" value="ECO:0000315"/>
    <property type="project" value="MGI"/>
</dbReference>
<dbReference type="GO" id="GO:0007286">
    <property type="term" value="P:spermatid development"/>
    <property type="evidence" value="ECO:0000315"/>
    <property type="project" value="MGI"/>
</dbReference>
<dbReference type="GO" id="GO:0007283">
    <property type="term" value="P:spermatogenesis"/>
    <property type="evidence" value="ECO:0000304"/>
    <property type="project" value="UniProtKB"/>
</dbReference>
<dbReference type="InterPro" id="IPR030465">
    <property type="entry name" value="CEP131"/>
</dbReference>
<dbReference type="PANTHER" id="PTHR31540">
    <property type="entry name" value="CENTROSOMAL PROTEIN OF 131 KDA"/>
    <property type="match status" value="1"/>
</dbReference>
<dbReference type="PANTHER" id="PTHR31540:SF1">
    <property type="entry name" value="CENTROSOMAL PROTEIN OF 131 KDA"/>
    <property type="match status" value="1"/>
</dbReference>
<comment type="function">
    <text evidence="1 3 4 6">Component of centriolar satellites contributing to the building of a complex and dynamic network required to regulate cilia/flagellum formation. In proliferating cells, MIB1-mediated ubiquitination induces its sequestration within centriolar satellites, precluding untimely cilia formation initiation. In contrast, during normal and ultraviolet or heat shock cellular stress-induced ciliogenesis, its non-ubiquitinated form is rapidly displaced from centriolar satellites and recruited to centrosome/basal bodies in a microtubule- and p38 MAPK-dependent manner. Also acts as a negative regulator of BBSome ciliary trafficking (By similarity). Plays a role in sperm flagellar formation; may be involved in the regulation of intraflagellar transport (IFT) and/or intramanchette (IMT) trafficking, which are important for axoneme extension and/or cargo delivery to the nascent sperm tail (PubMed:24415959). Required for optimal cell proliferation and cell cycle progression; may play a role in the regulation of genome stability and centriole duplication in non-ciliogenic cells (By similarity). Involved in centriole duplication (PubMed:26297806). Required for CEP152, WDR62 and CEP63 centrosomal localization and promotes the centrosomal localization of CDK2 (By similarity). Essential for maintaining proper centriolar satellite integrity (By similarity).</text>
</comment>
<comment type="subunit">
    <text evidence="1 5">Self-associates (By similarity). Associates with the centriolar satellite BBSome protein complex (PubMed:24550735) Interacts with BBS4; the interaction limits BBS4 availability for association with the BBSome complex, and hence negatively regulates ciliary localization of the BBSome complex. Interacts with MIB1. Interacts with PCM1; the interaction increases in response to ultraviolet light (UV) radiation. Associates with microtubule; association to microtubule is reduced in response to cellular stress, such as UV stimulation, in a process that requires p38 MAP kinase signaling. Interacts with CEP290, DCTN1, MAP1LC3B, PCNT, PCM1 and CEP152 (By similarity). Interacts with 14-3-3 proteins following UV-induced phosphorylation by MAPKAPK2; this inhibits formation of novel centriolar satellites (By similarity). Interacts with SDCCAG8 (By similarity). Interacts with CCDC61 (By similarity). Interacts with PLK4 (By similarity).</text>
</comment>
<comment type="subcellular location">
    <subcellularLocation>
        <location evidence="4">Cytoplasm</location>
        <location evidence="4">Cytoskeleton</location>
        <location evidence="4">Microtubule organizing center</location>
        <location evidence="4">Centrosome</location>
    </subcellularLocation>
    <subcellularLocation>
        <location evidence="4">Cytoplasm</location>
        <location evidence="4">Cytoskeleton</location>
        <location evidence="4">Microtubule organizing center</location>
        <location evidence="4">Centrosome</location>
        <location evidence="4">Centriolar satellite</location>
    </subcellularLocation>
    <subcellularLocation>
        <location evidence="1">Cytoplasm</location>
        <location evidence="1">Cytoskeleton</location>
        <location evidence="1">Microtubule organizing center</location>
        <location evidence="1">Centrosome</location>
        <location evidence="1">Centriole</location>
    </subcellularLocation>
    <subcellularLocation>
        <location evidence="4">Cytoplasm</location>
        <location evidence="4">Cytoskeleton</location>
        <location evidence="4">Cilium basal body</location>
    </subcellularLocation>
    <subcellularLocation>
        <location evidence="4">Cytoplasmic vesicle</location>
        <location evidence="4">Secretory vesicle</location>
        <location evidence="4">Acrosome</location>
    </subcellularLocation>
    <text evidence="1">Ubiquitinated form is sequestered and colocalized with BBS4, CEP290, PCM1 and PCNT at centriolar satellites in proliferating cells. Traffics towards and away from centriolar satellites and centrosome in a microtubule- and dynein-dependent manner in interphase cells. Displaced from centriolar satellites but still remained associated with centrosome in response to cellular stress, such as ultraviolet light (UV) radiation or heat shock, in a process that requires p38 MAPK signaling (By similarity). Colocalized with pericentriolar material protein PCM1 at centriolar satellites. During spermiogenesis, becomes enriched with nephrocystin NPHP1 at the transition zone, a structure at the base of the ciliary axoneme important for regulating traffic into the ciliary compartment. Traffics towards and away from the centrosome/basal bodies and the transition zone of the ciliary axoneme in a microtubule-dependent manner. Localized at the Golgi-derived acrosome and the centrosome-containing head-tail coupling apparatus (HTCA).</text>
</comment>
<comment type="tissue specificity">
    <text evidence="7">Localized to the pre-acrosome region of round and elongated spermatids in testis but also present in ovary, brain and adipose tissue.</text>
</comment>
<comment type="developmental stage">
    <text evidence="4">Widely expressed during development, with strong expression in tissues with high levels of cilia-dependent developmental signaling such as the limbs, eyes, somite derivatives and brain. Significant amounts are found in the testis of 16 day old mice, at a late stage of pachytene spermatocytes when meiosis occurs. The level increases thereafter.</text>
</comment>
<comment type="induction">
    <text>By 5-azacytidine.</text>
</comment>
<comment type="PTM">
    <text evidence="1">Ubiquitinated. Undergoes monoubiquitination catalyzed by the E3 ubiquitin-protein ligase MIB1 in proliferating cells, preventing cilia formation. Monoubiquitination by MIB1 is inhibited in response to cellular stress, such as ultraviolet light (UV) radiation or heat shock, resulting in ciliogenesis restoration (By similarity).</text>
</comment>
<comment type="PTM">
    <text evidence="1">MAPKAPK2-dependent phosphorylation at Ser-47 and Ser-78 occurs in response to cellular stress such as exposure to ultraviolet irradiation and promotes binding to 14-3-3 proteins which leads to cytoplasmic sequestration of CEP131 and blocks formation of new centriolar satellites (By similarity). Phosphorylation at Ser-78 mediated by PLK4 is essential for proper organization and integrity of centriolar satellites but is dispensable for its localization to centrioles and its function in ciliogenesis (By similarity).</text>
</comment>
<comment type="disruption phenotype">
    <text evidence="4">Females grow normally and are healthy. Males display developing sperm flagella abnormalities resulting in infertility. Post-meiotic defects during spermatogenesis with abnormal morphology of elongating and elongated spermatids, including teratozoospermia, premature apoptosis, but without increase in DNA damage. Sperm are immotile with shortened and morphologically abnormal flagella, and altered intraflagellar transport (IFT) and/or intramanchette (IMT) trafficking. Displays normal postnatal multiciliated airway epithelium. Lacks retinal degeneration and kidney cysts formations.</text>
</comment>
<comment type="miscellaneous">
    <text evidence="9">Transient cell cultured-based knock-down (by RNAi) of CEP131 leads to a reduction in ciliogenesis (PubMed:24415959). However, chronic absence of CEP131 following genetic deletion (knockout) shows that cilia develop and function normally in vivo. This suggests that CEP131 is not essential for ciliogenesis, except for the modified cilia of the developing sperm flagella, and that there is an alternative mechanism to compensate for the lack of CEP131 (PubMed:24415959).</text>
</comment>
<comment type="similarity">
    <text evidence="8">Belongs to the CEP131 family.</text>
</comment>
<accession>Q62036</accession>
<accession>B1AXJ0</accession>
<reference key="1">
    <citation type="journal article" date="1995" name="Eur. J. Biochem.">
        <title>Isolation of a novel cDNA that encodes a protein localized to the pre-acrosome region of spermatids.</title>
        <authorList>
            <person name="Aoto H."/>
            <person name="Tsuchida J."/>
            <person name="Nishina Y."/>
            <person name="Nishimune Y."/>
            <person name="Asano A."/>
            <person name="Tajima S."/>
        </authorList>
    </citation>
    <scope>NUCLEOTIDE SEQUENCE [MRNA]</scope>
    <scope>TISSUE SPECIFICITY</scope>
</reference>
<reference key="2">
    <citation type="journal article" date="1997" name="Genomics">
        <title>Genomic organization of the mouse AZ1 gene that encodes the protein localized to preacrosomes of spermatids.</title>
        <authorList>
            <person name="Aoto H."/>
            <person name="Miyake Y."/>
            <person name="Nakamura M."/>
            <person name="Tajima S."/>
        </authorList>
    </citation>
    <scope>NUCLEOTIDE SEQUENCE [GENOMIC DNA / MRNA]</scope>
    <source>
        <strain>BALB/cJ</strain>
        <tissue>Liver</tissue>
    </source>
</reference>
<reference key="3">
    <citation type="journal article" date="2009" name="PLoS Biol.">
        <title>Lineage-specific biology revealed by a finished genome assembly of the mouse.</title>
        <authorList>
            <person name="Church D.M."/>
            <person name="Goodstadt L."/>
            <person name="Hillier L.W."/>
            <person name="Zody M.C."/>
            <person name="Goldstein S."/>
            <person name="She X."/>
            <person name="Bult C.J."/>
            <person name="Agarwala R."/>
            <person name="Cherry J.L."/>
            <person name="DiCuccio M."/>
            <person name="Hlavina W."/>
            <person name="Kapustin Y."/>
            <person name="Meric P."/>
            <person name="Maglott D."/>
            <person name="Birtle Z."/>
            <person name="Marques A.C."/>
            <person name="Graves T."/>
            <person name="Zhou S."/>
            <person name="Teague B."/>
            <person name="Potamousis K."/>
            <person name="Churas C."/>
            <person name="Place M."/>
            <person name="Herschleb J."/>
            <person name="Runnheim R."/>
            <person name="Forrest D."/>
            <person name="Amos-Landgraf J."/>
            <person name="Schwartz D.C."/>
            <person name="Cheng Z."/>
            <person name="Lindblad-Toh K."/>
            <person name="Eichler E.E."/>
            <person name="Ponting C.P."/>
        </authorList>
    </citation>
    <scope>NUCLEOTIDE SEQUENCE [LARGE SCALE GENOMIC DNA]</scope>
    <source>
        <strain>C57BL/6J</strain>
    </source>
</reference>
<reference key="4">
    <citation type="journal article" date="2007" name="Proc. Natl. Acad. Sci. U.S.A.">
        <title>Large-scale phosphorylation analysis of mouse liver.</title>
        <authorList>
            <person name="Villen J."/>
            <person name="Beausoleil S.A."/>
            <person name="Gerber S.A."/>
            <person name="Gygi S.P."/>
        </authorList>
    </citation>
    <scope>IDENTIFICATION BY MASS SPECTROMETRY [LARGE SCALE ANALYSIS]</scope>
    <source>
        <tissue>Liver</tissue>
    </source>
</reference>
<reference key="5">
    <citation type="journal article" date="2010" name="Cell">
        <title>A tissue-specific atlas of mouse protein phosphorylation and expression.</title>
        <authorList>
            <person name="Huttlin E.L."/>
            <person name="Jedrychowski M.P."/>
            <person name="Elias J.E."/>
            <person name="Goswami T."/>
            <person name="Rad R."/>
            <person name="Beausoleil S.A."/>
            <person name="Villen J."/>
            <person name="Haas W."/>
            <person name="Sowa M.E."/>
            <person name="Gygi S.P."/>
        </authorList>
    </citation>
    <scope>PHOSPHORYLATION [LARGE SCALE ANALYSIS] AT SER-14; SER-47; THR-473 AND SER-481</scope>
    <scope>IDENTIFICATION BY MASS SPECTROMETRY [LARGE SCALE ANALYSIS]</scope>
    <source>
        <tissue>Brain</tissue>
        <tissue>Brown adipose tissue</tissue>
        <tissue>Kidney</tissue>
        <tissue>Lung</tissue>
        <tissue>Spleen</tissue>
        <tissue>Testis</tissue>
    </source>
</reference>
<reference key="6">
    <citation type="journal article" date="2013" name="EMBO J.">
        <title>Cilia born out of shock and stress.</title>
        <authorList>
            <person name="Chavali P.L."/>
            <person name="Gergely F."/>
        </authorList>
    </citation>
    <scope>REVIEW</scope>
    <scope>FUNCTION</scope>
</reference>
<reference key="7">
    <citation type="journal article" date="2013" name="PLoS Genet.">
        <title>Acute versus chronic loss of mammalian Azi1/Cep131 results in distinct ciliary phenotypes.</title>
        <authorList>
            <person name="Hall E.A."/>
            <person name="Keighren M."/>
            <person name="Ford M.J."/>
            <person name="Davey T."/>
            <person name="Jarman A.P."/>
            <person name="Smith L.B."/>
            <person name="Jackson I.J."/>
            <person name="Mill P."/>
        </authorList>
    </citation>
    <scope>FUNCTION IN SPERMIOGENESIS</scope>
    <scope>DISRUPTION PHENOTYPE</scope>
    <scope>SUBCELLULAR LOCATION</scope>
    <scope>DEVELOPMENTAL STAGE</scope>
</reference>
<reference key="8">
    <citation type="journal article" date="2014" name="PLoS Genet.">
        <title>The centriolar satellite protein AZI1 interacts with BBS4 and regulates ciliary trafficking of the BBSome.</title>
        <authorList>
            <person name="Chamling X."/>
            <person name="Seo S."/>
            <person name="Searby C.C."/>
            <person name="Kim G."/>
            <person name="Slusarski D.C."/>
            <person name="Sheffield V.C."/>
        </authorList>
    </citation>
    <scope>ASSOCIATION WITH THE BBSOME COMPLEX</scope>
</reference>
<reference key="9">
    <citation type="journal article" date="2015" name="Elife">
        <title>Centriolar satellites assemble centrosomal microcephaly proteins to recruit CDK2 and promote centriole duplication.</title>
        <authorList>
            <person name="Kodani A."/>
            <person name="Yu T.W."/>
            <person name="Johnson J.R."/>
            <person name="Jayaraman D."/>
            <person name="Johnson T.L."/>
            <person name="Al-Gazali L."/>
            <person name="Sztriha L."/>
            <person name="Partlow J.N."/>
            <person name="Kim H."/>
            <person name="Krup A.L."/>
            <person name="Dammermann A."/>
            <person name="Krogan N."/>
            <person name="Walsh C.A."/>
            <person name="Reiter J.F."/>
        </authorList>
    </citation>
    <scope>FUNCTION</scope>
    <scope>SUBCELLULAR LOCATION</scope>
    <scope>INTERACTION WITH CEP152 AND PCM1</scope>
</reference>